<sequence>MASKGTEGGHGGVERKEQQQQRGYQLPRDSRGSLEVFNPSSASSFRTAAAAPKSASPFLAIPDREEDNVVAQQRAAEWGLVLQTDHHTGLPQGVSARPSSGSARTSSEDNPQQQQSAAAIPRVSEELRAALSVFQQTFVVSDATHPNHPIMYASAGFFNMTGYTSKEVVGRNCRFLQGSGTDPHEIDKIRQSLANGSNYCGRILNYKKDGTPFWNLLTIAPIKDEDGRLLKFIGMQVEVSKYTEGKKDTVVRPNGLSESLIKYDARQKDHARSSVSELLLALKNPRSLSESSNNTLKRKSQESLSMSMSEVPSKRSSESGSRRNSRSGTRSSLQKINEVPDQVNRTRKSGLRAFMGFLGMGHGSVEKNMLKPRDEDPLIDSDDERPESFEDEFRRKEMRRGIDLATTLERIEKNFVITDPRLPDNPIIFASDSFLQLTEYNREEILGRNCRFLQGPETDRATVRKIRDAIDNQAEVTVQLINYTKSGKKFWNLFHLQPMRDQKGDVQYFIGVQLDGTEHVQDDAAKEGVVLVKKTADNIDEAAKELPDANLRPKDLWANHSKVVLPNPHMKDTASWRAIQKVLESGESIGLKHFRPVKPLGSGDTGSVHLVELLNTGEYFAMKAMDKSIMLNRNKVHRATAERQILDLLDHPFLPTLYASFQTKTHICLITDYCPGGELFVLLDNQPLKVLHEDAVRFYAAEVVVALEYLHCQGIIYRDLKPENILLHRDGHISLTDFDLSCLTSCRPQVFLPEDADEKKGRKNGSYPIFFAEPMRASNSFVGTEEYIAPEIITGAGHTSAVDWWALGILLYEMLYGYTPFRGKTRQRTFANILHKDIRFPASISVSLAARQLMYRLLHRDPANRLGSYEGANEIKGHPFFRGINWPLIRATAPPKLEIPLFSKDDMEKKGLVTNNRTDMF</sequence>
<organism>
    <name type="scientific">Oryza sativa subsp. japonica</name>
    <name type="common">Rice</name>
    <dbReference type="NCBI Taxonomy" id="39947"/>
    <lineage>
        <taxon>Eukaryota</taxon>
        <taxon>Viridiplantae</taxon>
        <taxon>Streptophyta</taxon>
        <taxon>Embryophyta</taxon>
        <taxon>Tracheophyta</taxon>
        <taxon>Spermatophyta</taxon>
        <taxon>Magnoliopsida</taxon>
        <taxon>Liliopsida</taxon>
        <taxon>Poales</taxon>
        <taxon>Poaceae</taxon>
        <taxon>BOP clade</taxon>
        <taxon>Oryzoideae</taxon>
        <taxon>Oryzeae</taxon>
        <taxon>Oryzinae</taxon>
        <taxon>Oryza</taxon>
        <taxon>Oryza sativa</taxon>
    </lineage>
</organism>
<name>PHT1B_ORYSJ</name>
<evidence type="ECO:0000250" key="1"/>
<evidence type="ECO:0000255" key="2">
    <source>
        <dbReference type="PROSITE-ProRule" id="PRU00140"/>
    </source>
</evidence>
<evidence type="ECO:0000255" key="3">
    <source>
        <dbReference type="PROSITE-ProRule" id="PRU00141"/>
    </source>
</evidence>
<evidence type="ECO:0000255" key="4">
    <source>
        <dbReference type="PROSITE-ProRule" id="PRU00159"/>
    </source>
</evidence>
<evidence type="ECO:0000255" key="5">
    <source>
        <dbReference type="PROSITE-ProRule" id="PRU10027"/>
    </source>
</evidence>
<evidence type="ECO:0000256" key="6">
    <source>
        <dbReference type="SAM" id="MobiDB-lite"/>
    </source>
</evidence>
<evidence type="ECO:0000269" key="7">
    <source>
    </source>
</evidence>
<feature type="chain" id="PRO_0000395003" description="Phototropin-1B">
    <location>
        <begin position="1"/>
        <end position="921"/>
    </location>
</feature>
<feature type="domain" description="PAS 1" evidence="2">
    <location>
        <begin position="123"/>
        <end position="197"/>
    </location>
</feature>
<feature type="domain" description="PAC 1" evidence="3">
    <location>
        <begin position="197"/>
        <end position="251"/>
    </location>
</feature>
<feature type="domain" description="PAS 2" evidence="2">
    <location>
        <begin position="400"/>
        <end position="473"/>
    </location>
</feature>
<feature type="domain" description="PAC 2" evidence="3">
    <location>
        <begin position="474"/>
        <end position="528"/>
    </location>
</feature>
<feature type="domain" description="Protein kinase" evidence="4">
    <location>
        <begin position="594"/>
        <end position="881"/>
    </location>
</feature>
<feature type="region of interest" description="Disordered" evidence="6">
    <location>
        <begin position="1"/>
        <end position="59"/>
    </location>
</feature>
<feature type="region of interest" description="Disordered" evidence="6">
    <location>
        <begin position="88"/>
        <end position="118"/>
    </location>
</feature>
<feature type="region of interest" description="Disordered" evidence="6">
    <location>
        <begin position="286"/>
        <end position="345"/>
    </location>
</feature>
<feature type="region of interest" description="Disordered" evidence="6">
    <location>
        <begin position="366"/>
        <end position="391"/>
    </location>
</feature>
<feature type="compositionally biased region" description="Gly residues" evidence="6">
    <location>
        <begin position="1"/>
        <end position="11"/>
    </location>
</feature>
<feature type="compositionally biased region" description="Low complexity" evidence="6">
    <location>
        <begin position="40"/>
        <end position="51"/>
    </location>
</feature>
<feature type="compositionally biased region" description="Polar residues" evidence="6">
    <location>
        <begin position="97"/>
        <end position="117"/>
    </location>
</feature>
<feature type="compositionally biased region" description="Polar residues" evidence="6">
    <location>
        <begin position="286"/>
        <end position="295"/>
    </location>
</feature>
<feature type="compositionally biased region" description="Basic and acidic residues" evidence="6">
    <location>
        <begin position="312"/>
        <end position="321"/>
    </location>
</feature>
<feature type="compositionally biased region" description="Basic and acidic residues" evidence="6">
    <location>
        <begin position="366"/>
        <end position="376"/>
    </location>
</feature>
<feature type="active site" description="Proton acceptor" evidence="4 5">
    <location>
        <position position="719"/>
    </location>
</feature>
<feature type="binding site" evidence="1">
    <location>
        <begin position="172"/>
        <end position="177"/>
    </location>
    <ligand>
        <name>FMN</name>
        <dbReference type="ChEBI" id="CHEBI:58210"/>
    </ligand>
</feature>
<feature type="binding site" evidence="1">
    <location>
        <position position="190"/>
    </location>
    <ligand>
        <name>FMN</name>
        <dbReference type="ChEBI" id="CHEBI:58210"/>
    </ligand>
</feature>
<feature type="binding site" evidence="1">
    <location>
        <position position="205"/>
    </location>
    <ligand>
        <name>FMN</name>
        <dbReference type="ChEBI" id="CHEBI:58210"/>
    </ligand>
</feature>
<feature type="binding site" evidence="1">
    <location>
        <position position="215"/>
    </location>
    <ligand>
        <name>FMN</name>
        <dbReference type="ChEBI" id="CHEBI:58210"/>
    </ligand>
</feature>
<feature type="binding site" evidence="1">
    <location>
        <position position="236"/>
    </location>
    <ligand>
        <name>FMN</name>
        <dbReference type="ChEBI" id="CHEBI:58210"/>
    </ligand>
</feature>
<feature type="binding site" evidence="1">
    <location>
        <begin position="449"/>
        <end position="454"/>
    </location>
    <ligand>
        <name>FMN</name>
        <dbReference type="ChEBI" id="CHEBI:58210"/>
    </ligand>
</feature>
<feature type="binding site" evidence="1">
    <location>
        <position position="467"/>
    </location>
    <ligand>
        <name>FMN</name>
        <dbReference type="ChEBI" id="CHEBI:58210"/>
    </ligand>
</feature>
<feature type="binding site" evidence="1">
    <location>
        <position position="482"/>
    </location>
    <ligand>
        <name>FMN</name>
        <dbReference type="ChEBI" id="CHEBI:58210"/>
    </ligand>
</feature>
<feature type="binding site" evidence="1">
    <location>
        <position position="492"/>
    </location>
    <ligand>
        <name>FMN</name>
        <dbReference type="ChEBI" id="CHEBI:58210"/>
    </ligand>
</feature>
<feature type="binding site" evidence="1">
    <location>
        <position position="513"/>
    </location>
    <ligand>
        <name>FMN</name>
        <dbReference type="ChEBI" id="CHEBI:58210"/>
    </ligand>
</feature>
<feature type="binding site" evidence="4">
    <location>
        <begin position="600"/>
        <end position="608"/>
    </location>
    <ligand>
        <name>ATP</name>
        <dbReference type="ChEBI" id="CHEBI:30616"/>
    </ligand>
</feature>
<feature type="binding site" evidence="4">
    <location>
        <position position="623"/>
    </location>
    <ligand>
        <name>ATP</name>
        <dbReference type="ChEBI" id="CHEBI:30616"/>
    </ligand>
</feature>
<feature type="modified residue" description="S-4a-FMN cysteine" evidence="1">
    <location>
        <position position="173"/>
    </location>
</feature>
<feature type="modified residue" description="S-4a-FMN cysteine" evidence="1">
    <location>
        <position position="450"/>
    </location>
</feature>
<protein>
    <recommendedName>
        <fullName>Phototropin-1B</fullName>
        <ecNumber>2.7.11.1</ecNumber>
    </recommendedName>
</protein>
<keyword id="KW-0067">ATP-binding</keyword>
<keyword id="KW-0157">Chromophore</keyword>
<keyword id="KW-0285">Flavoprotein</keyword>
<keyword id="KW-0288">FMN</keyword>
<keyword id="KW-0418">Kinase</keyword>
<keyword id="KW-0547">Nucleotide-binding</keyword>
<keyword id="KW-0600">Photoreceptor protein</keyword>
<keyword id="KW-0675">Receptor</keyword>
<keyword id="KW-1185">Reference proteome</keyword>
<keyword id="KW-0677">Repeat</keyword>
<keyword id="KW-0716">Sensory transduction</keyword>
<keyword id="KW-0723">Serine/threonine-protein kinase</keyword>
<keyword id="KW-0808">Transferase</keyword>
<gene>
    <name type="primary">PHOT1B</name>
    <name type="ordered locus">Os11g0102200</name>
    <name type="ordered locus">LOC_Os11g01140</name>
</gene>
<proteinExistence type="evidence at protein level"/>
<comment type="function">
    <text evidence="1">Protein kinase that acts as a blue light photoreceptor in a signal-transduction pathway for phototropic responses. Regulates a wide range of physiological activities in plants that maximize the efficiency of photosynthesis, such as chloroplast relocations, stomata opening, and leaf expansion (By similarity).</text>
</comment>
<comment type="catalytic activity">
    <reaction>
        <text>L-seryl-[protein] + ATP = O-phospho-L-seryl-[protein] + ADP + H(+)</text>
        <dbReference type="Rhea" id="RHEA:17989"/>
        <dbReference type="Rhea" id="RHEA-COMP:9863"/>
        <dbReference type="Rhea" id="RHEA-COMP:11604"/>
        <dbReference type="ChEBI" id="CHEBI:15378"/>
        <dbReference type="ChEBI" id="CHEBI:29999"/>
        <dbReference type="ChEBI" id="CHEBI:30616"/>
        <dbReference type="ChEBI" id="CHEBI:83421"/>
        <dbReference type="ChEBI" id="CHEBI:456216"/>
        <dbReference type="EC" id="2.7.11.1"/>
    </reaction>
</comment>
<comment type="catalytic activity">
    <reaction>
        <text>L-threonyl-[protein] + ATP = O-phospho-L-threonyl-[protein] + ADP + H(+)</text>
        <dbReference type="Rhea" id="RHEA:46608"/>
        <dbReference type="Rhea" id="RHEA-COMP:11060"/>
        <dbReference type="Rhea" id="RHEA-COMP:11605"/>
        <dbReference type="ChEBI" id="CHEBI:15378"/>
        <dbReference type="ChEBI" id="CHEBI:30013"/>
        <dbReference type="ChEBI" id="CHEBI:30616"/>
        <dbReference type="ChEBI" id="CHEBI:61977"/>
        <dbReference type="ChEBI" id="CHEBI:456216"/>
        <dbReference type="EC" id="2.7.11.1"/>
    </reaction>
</comment>
<comment type="cofactor">
    <cofactor evidence="1">
        <name>FMN</name>
        <dbReference type="ChEBI" id="CHEBI:58210"/>
    </cofactor>
    <text evidence="1">Binds 2 FMN per subunit.</text>
</comment>
<comment type="biophysicochemical properties">
    <absorption>
        <max evidence="7">450 nm</max>
        <text>Exhibits a smaller absorbance peak at 350 nm. The broad fluorescence emission spectrum peaks at 490 nm.</text>
    </absorption>
</comment>
<comment type="subunit">
    <text evidence="1">Homodimer.</text>
</comment>
<comment type="domain">
    <text evidence="1">The PAS (PER-ARNT-SIM) domains are required for the binding of FMN chromophores.</text>
</comment>
<comment type="PTM">
    <text evidence="1">Autophosphorylated in response to blue light irradiation.</text>
</comment>
<comment type="PTM">
    <text evidence="1">2 molecules of FMN bind covalently to cysteines after exposure to blue light and are reversed in the dark.</text>
</comment>
<comment type="miscellaneous">
    <text>Undergoes a photocycle characterized by fluorescence and absorption changes induced by blue light.</text>
</comment>
<comment type="similarity">
    <text evidence="4">Belongs to the protein kinase superfamily. Ser/Thr protein kinase family.</text>
</comment>
<reference key="1">
    <citation type="journal article" date="2005" name="BMC Biol.">
        <title>The sequence of rice chromosomes 11 and 12, rich in disease resistance genes and recent gene duplications.</title>
        <authorList>
            <consortium name="The rice chromosomes 11 and 12 sequencing consortia"/>
        </authorList>
    </citation>
    <scope>NUCLEOTIDE SEQUENCE [LARGE SCALE GENOMIC DNA]</scope>
    <source>
        <strain>cv. Nipponbare</strain>
    </source>
</reference>
<reference key="2">
    <citation type="journal article" date="2005" name="Nature">
        <title>The map-based sequence of the rice genome.</title>
        <authorList>
            <consortium name="International rice genome sequencing project (IRGSP)"/>
        </authorList>
    </citation>
    <scope>NUCLEOTIDE SEQUENCE [LARGE SCALE GENOMIC DNA]</scope>
    <source>
        <strain>cv. Nipponbare</strain>
    </source>
</reference>
<reference key="3">
    <citation type="journal article" date="2008" name="Nucleic Acids Res.">
        <title>The rice annotation project database (RAP-DB): 2008 update.</title>
        <authorList>
            <consortium name="The rice annotation project (RAP)"/>
        </authorList>
    </citation>
    <scope>GENOME REANNOTATION</scope>
    <source>
        <strain>cv. Nipponbare</strain>
    </source>
</reference>
<reference key="4">
    <citation type="journal article" date="2013" name="Rice">
        <title>Improvement of the Oryza sativa Nipponbare reference genome using next generation sequence and optical map data.</title>
        <authorList>
            <person name="Kawahara Y."/>
            <person name="de la Bastide M."/>
            <person name="Hamilton J.P."/>
            <person name="Kanamori H."/>
            <person name="McCombie W.R."/>
            <person name="Ouyang S."/>
            <person name="Schwartz D.C."/>
            <person name="Tanaka T."/>
            <person name="Wu J."/>
            <person name="Zhou S."/>
            <person name="Childs K.L."/>
            <person name="Davidson R.M."/>
            <person name="Lin H."/>
            <person name="Quesada-Ocampo L."/>
            <person name="Vaillancourt B."/>
            <person name="Sakai H."/>
            <person name="Lee S.S."/>
            <person name="Kim J."/>
            <person name="Numa H."/>
            <person name="Itoh T."/>
            <person name="Buell C.R."/>
            <person name="Matsumoto T."/>
        </authorList>
    </citation>
    <scope>GENOME REANNOTATION</scope>
    <source>
        <strain>cv. Nipponbare</strain>
    </source>
</reference>
<reference key="5">
    <citation type="journal article" date="2002" name="Plant Physiol.">
        <title>Photochemical properties of the flavin mononucleotide-binding domains of the phototropins from Arabidopsis, rice, and Chlamydomonas reinhardtii.</title>
        <authorList>
            <person name="Kasahara M."/>
            <person name="Swartz T.E."/>
            <person name="Olney M.A."/>
            <person name="Onodera A."/>
            <person name="Mochizuki N."/>
            <person name="Fukuzawa H."/>
            <person name="Asamizu E."/>
            <person name="Tabata S."/>
            <person name="Kanegae H."/>
            <person name="Takano M."/>
            <person name="Christie J.M."/>
            <person name="Nagatani A."/>
            <person name="Briggs W.R."/>
        </authorList>
    </citation>
    <scope>BIOPHYSICOCHEMICAL PROPERTIES</scope>
</reference>
<accession>Q2RBR1</accession>
<accession>A0A0P0XXT5</accession>
<dbReference type="EC" id="2.7.11.1"/>
<dbReference type="EMBL" id="DP000010">
    <property type="protein sequence ID" value="ABA91098.2"/>
    <property type="molecule type" value="Genomic_DNA"/>
</dbReference>
<dbReference type="EMBL" id="AP008217">
    <property type="protein sequence ID" value="BAF27360.1"/>
    <property type="molecule type" value="Genomic_DNA"/>
</dbReference>
<dbReference type="EMBL" id="AP014967">
    <property type="protein sequence ID" value="BAT12271.1"/>
    <property type="molecule type" value="Genomic_DNA"/>
</dbReference>
<dbReference type="RefSeq" id="XP_015617473.1">
    <property type="nucleotide sequence ID" value="XM_015761987.1"/>
</dbReference>
<dbReference type="SMR" id="Q2RBR1"/>
<dbReference type="FunCoup" id="Q2RBR1">
    <property type="interactions" value="589"/>
</dbReference>
<dbReference type="STRING" id="39947.Q2RBR1"/>
<dbReference type="PaxDb" id="39947-Q2RBR1"/>
<dbReference type="EnsemblPlants" id="Os11t0102200-00">
    <property type="protein sequence ID" value="Os11t0102200-00"/>
    <property type="gene ID" value="Os11g0102200"/>
</dbReference>
<dbReference type="Gramene" id="Os11t0102200-00">
    <property type="protein sequence ID" value="Os11t0102200-00"/>
    <property type="gene ID" value="Os11g0102200"/>
</dbReference>
<dbReference type="KEGG" id="dosa:Os11g0102200"/>
<dbReference type="eggNOG" id="ENOG502QPPH">
    <property type="taxonomic scope" value="Eukaryota"/>
</dbReference>
<dbReference type="HOGENOM" id="CLU_006321_1_0_1"/>
<dbReference type="InParanoid" id="Q2RBR1"/>
<dbReference type="OMA" id="LKLIGMQ"/>
<dbReference type="OrthoDB" id="432483at2759"/>
<dbReference type="Proteomes" id="UP000000763">
    <property type="component" value="Chromosome 11"/>
</dbReference>
<dbReference type="Proteomes" id="UP000059680">
    <property type="component" value="Chromosome 11"/>
</dbReference>
<dbReference type="GO" id="GO:0005737">
    <property type="term" value="C:cytoplasm"/>
    <property type="evidence" value="ECO:0000318"/>
    <property type="project" value="GO_Central"/>
</dbReference>
<dbReference type="GO" id="GO:0005634">
    <property type="term" value="C:nucleus"/>
    <property type="evidence" value="ECO:0000318"/>
    <property type="project" value="GO_Central"/>
</dbReference>
<dbReference type="GO" id="GO:0005886">
    <property type="term" value="C:plasma membrane"/>
    <property type="evidence" value="ECO:0000318"/>
    <property type="project" value="GO_Central"/>
</dbReference>
<dbReference type="GO" id="GO:0005524">
    <property type="term" value="F:ATP binding"/>
    <property type="evidence" value="ECO:0007669"/>
    <property type="project" value="UniProtKB-KW"/>
</dbReference>
<dbReference type="GO" id="GO:0009882">
    <property type="term" value="F:blue light photoreceptor activity"/>
    <property type="evidence" value="ECO:0000314"/>
    <property type="project" value="UniProtKB"/>
</dbReference>
<dbReference type="GO" id="GO:0106310">
    <property type="term" value="F:protein serine kinase activity"/>
    <property type="evidence" value="ECO:0007669"/>
    <property type="project" value="RHEA"/>
</dbReference>
<dbReference type="GO" id="GO:0004674">
    <property type="term" value="F:protein serine/threonine kinase activity"/>
    <property type="evidence" value="ECO:0000318"/>
    <property type="project" value="GO_Central"/>
</dbReference>
<dbReference type="CDD" id="cd00130">
    <property type="entry name" value="PAS"/>
    <property type="match status" value="2"/>
</dbReference>
<dbReference type="CDD" id="cd05574">
    <property type="entry name" value="STKc_phototropin_like"/>
    <property type="match status" value="1"/>
</dbReference>
<dbReference type="FunFam" id="3.30.200.20:FF:000133">
    <property type="entry name" value="LOV domain-containing protein"/>
    <property type="match status" value="1"/>
</dbReference>
<dbReference type="FunFam" id="3.30.450.20:FF:000002">
    <property type="entry name" value="LOV domain-containing protein"/>
    <property type="match status" value="1"/>
</dbReference>
<dbReference type="FunFam" id="1.10.510.10:FF:000265">
    <property type="entry name" value="Putative LOV domain-containing protein"/>
    <property type="match status" value="1"/>
</dbReference>
<dbReference type="FunFam" id="3.30.450.20:FF:000036">
    <property type="entry name" value="Putative LOV domain-containing protein"/>
    <property type="match status" value="1"/>
</dbReference>
<dbReference type="Gene3D" id="3.30.450.20">
    <property type="entry name" value="PAS domain"/>
    <property type="match status" value="2"/>
</dbReference>
<dbReference type="Gene3D" id="3.30.200.20">
    <property type="entry name" value="Phosphorylase Kinase, domain 1"/>
    <property type="match status" value="1"/>
</dbReference>
<dbReference type="Gene3D" id="1.10.510.10">
    <property type="entry name" value="Transferase(Phosphotransferase) domain 1"/>
    <property type="match status" value="1"/>
</dbReference>
<dbReference type="InterPro" id="IPR011009">
    <property type="entry name" value="Kinase-like_dom_sf"/>
</dbReference>
<dbReference type="InterPro" id="IPR001610">
    <property type="entry name" value="PAC"/>
</dbReference>
<dbReference type="InterPro" id="IPR000014">
    <property type="entry name" value="PAS"/>
</dbReference>
<dbReference type="InterPro" id="IPR000700">
    <property type="entry name" value="PAS-assoc_C"/>
</dbReference>
<dbReference type="InterPro" id="IPR035965">
    <property type="entry name" value="PAS-like_dom_sf"/>
</dbReference>
<dbReference type="InterPro" id="IPR000719">
    <property type="entry name" value="Prot_kinase_dom"/>
</dbReference>
<dbReference type="InterPro" id="IPR017441">
    <property type="entry name" value="Protein_kinase_ATP_BS"/>
</dbReference>
<dbReference type="InterPro" id="IPR008271">
    <property type="entry name" value="Ser/Thr_kinase_AS"/>
</dbReference>
<dbReference type="NCBIfam" id="TIGR00229">
    <property type="entry name" value="sensory_box"/>
    <property type="match status" value="2"/>
</dbReference>
<dbReference type="PANTHER" id="PTHR45637">
    <property type="entry name" value="FLIPPASE KINASE 1-RELATED"/>
    <property type="match status" value="1"/>
</dbReference>
<dbReference type="Pfam" id="PF13426">
    <property type="entry name" value="PAS_9"/>
    <property type="match status" value="2"/>
</dbReference>
<dbReference type="Pfam" id="PF00069">
    <property type="entry name" value="Pkinase"/>
    <property type="match status" value="1"/>
</dbReference>
<dbReference type="SMART" id="SM00086">
    <property type="entry name" value="PAC"/>
    <property type="match status" value="2"/>
</dbReference>
<dbReference type="SMART" id="SM00091">
    <property type="entry name" value="PAS"/>
    <property type="match status" value="2"/>
</dbReference>
<dbReference type="SMART" id="SM00220">
    <property type="entry name" value="S_TKc"/>
    <property type="match status" value="1"/>
</dbReference>
<dbReference type="SUPFAM" id="SSF56112">
    <property type="entry name" value="Protein kinase-like (PK-like)"/>
    <property type="match status" value="1"/>
</dbReference>
<dbReference type="SUPFAM" id="SSF55785">
    <property type="entry name" value="PYP-like sensor domain (PAS domain)"/>
    <property type="match status" value="2"/>
</dbReference>
<dbReference type="PROSITE" id="PS50113">
    <property type="entry name" value="PAC"/>
    <property type="match status" value="2"/>
</dbReference>
<dbReference type="PROSITE" id="PS50112">
    <property type="entry name" value="PAS"/>
    <property type="match status" value="2"/>
</dbReference>
<dbReference type="PROSITE" id="PS00107">
    <property type="entry name" value="PROTEIN_KINASE_ATP"/>
    <property type="match status" value="1"/>
</dbReference>
<dbReference type="PROSITE" id="PS50011">
    <property type="entry name" value="PROTEIN_KINASE_DOM"/>
    <property type="match status" value="1"/>
</dbReference>
<dbReference type="PROSITE" id="PS00108">
    <property type="entry name" value="PROTEIN_KINASE_ST"/>
    <property type="match status" value="1"/>
</dbReference>